<comment type="catalytic activity">
    <reaction evidence="1">
        <text>GTP + H2O = GDP + phosphate + H(+)</text>
        <dbReference type="Rhea" id="RHEA:19669"/>
        <dbReference type="ChEBI" id="CHEBI:15377"/>
        <dbReference type="ChEBI" id="CHEBI:15378"/>
        <dbReference type="ChEBI" id="CHEBI:37565"/>
        <dbReference type="ChEBI" id="CHEBI:43474"/>
        <dbReference type="ChEBI" id="CHEBI:58189"/>
        <dbReference type="EC" id="3.6.5.2"/>
    </reaction>
</comment>
<comment type="activity regulation">
    <text>Alternates between an inactive form bound to GDP and an active form bound to GTP. Activated by a guanine nucleotide-exchange factor (GEF) and inactivated by a GTPase-activating protein (GAP).</text>
</comment>
<comment type="subcellular location">
    <subcellularLocation>
        <location evidence="3">Host cell membrane</location>
        <topology evidence="3">Lipid-anchor</topology>
        <orientation evidence="3">Cytoplasmic side</orientation>
    </subcellularLocation>
</comment>
<comment type="similarity">
    <text evidence="3">Belongs to the small GTPase superfamily. Ras family.</text>
</comment>
<feature type="chain" id="PRO_0000030181" description="GTPase HRas">
    <location>
        <begin position="1"/>
        <end position="186"/>
    </location>
</feature>
<feature type="propeptide" id="PRO_0000030182" description="Removed in mature form" evidence="3">
    <location>
        <begin position="187"/>
        <end position="189"/>
    </location>
</feature>
<feature type="short sequence motif" description="Effector region">
    <location>
        <begin position="32"/>
        <end position="40"/>
    </location>
</feature>
<feature type="binding site">
    <location>
        <begin position="10"/>
        <end position="17"/>
    </location>
    <ligand>
        <name>GTP</name>
        <dbReference type="ChEBI" id="CHEBI:37565"/>
    </ligand>
</feature>
<feature type="binding site">
    <location>
        <begin position="57"/>
        <end position="61"/>
    </location>
    <ligand>
        <name>GTP</name>
        <dbReference type="ChEBI" id="CHEBI:37565"/>
    </ligand>
</feature>
<feature type="binding site">
    <location>
        <begin position="116"/>
        <end position="119"/>
    </location>
    <ligand>
        <name>GTP</name>
        <dbReference type="ChEBI" id="CHEBI:37565"/>
    </ligand>
</feature>
<feature type="modified residue" description="Cysteine methyl ester; by host" evidence="3">
    <location>
        <position position="186"/>
    </location>
</feature>
<feature type="lipid moiety-binding region" description="S-palmitoyl cysteine; by host" evidence="2">
    <location>
        <position position="181"/>
    </location>
</feature>
<feature type="lipid moiety-binding region" description="S-palmitoyl cysteine; by host" evidence="2">
    <location>
        <position position="184"/>
    </location>
</feature>
<feature type="lipid moiety-binding region" description="S-farnesyl cysteine; by host" evidence="2">
    <location>
        <position position="186"/>
    </location>
</feature>
<keyword id="KW-0342">GTP-binding</keyword>
<keyword id="KW-1032">Host cell membrane</keyword>
<keyword id="KW-1043">Host membrane</keyword>
<keyword id="KW-0378">Hydrolase</keyword>
<keyword id="KW-0449">Lipoprotein</keyword>
<keyword id="KW-0472">Membrane</keyword>
<keyword id="KW-0488">Methylation</keyword>
<keyword id="KW-0547">Nucleotide-binding</keyword>
<keyword id="KW-0553">Oncogene</keyword>
<keyword id="KW-0564">Palmitate</keyword>
<keyword id="KW-0636">Prenylation</keyword>
<protein>
    <recommendedName>
        <fullName>GTPase HRas</fullName>
        <ecNumber evidence="1">3.6.5.2</ecNumber>
    </recommendedName>
    <alternativeName>
        <fullName>Transforming protein p21/H-Ras</fullName>
    </alternativeName>
</protein>
<name>RASH_MSVNS</name>
<organismHost>
    <name type="scientific">Mus musculus</name>
    <name type="common">Mouse</name>
    <dbReference type="NCBI Taxonomy" id="10090"/>
</organismHost>
<proteinExistence type="inferred from homology"/>
<dbReference type="EC" id="3.6.5.2" evidence="1"/>
<dbReference type="EMBL" id="M30733">
    <property type="protein sequence ID" value="AAA46574.1"/>
    <property type="molecule type" value="Genomic_RNA"/>
</dbReference>
<dbReference type="SMR" id="P23175"/>
<dbReference type="GO" id="GO:0020002">
    <property type="term" value="C:host cell plasma membrane"/>
    <property type="evidence" value="ECO:0007669"/>
    <property type="project" value="UniProtKB-SubCell"/>
</dbReference>
<dbReference type="GO" id="GO:0016020">
    <property type="term" value="C:membrane"/>
    <property type="evidence" value="ECO:0007669"/>
    <property type="project" value="UniProtKB-KW"/>
</dbReference>
<dbReference type="GO" id="GO:0003925">
    <property type="term" value="F:G protein activity"/>
    <property type="evidence" value="ECO:0007669"/>
    <property type="project" value="UniProtKB-EC"/>
</dbReference>
<dbReference type="GO" id="GO:0005525">
    <property type="term" value="F:GTP binding"/>
    <property type="evidence" value="ECO:0007669"/>
    <property type="project" value="UniProtKB-KW"/>
</dbReference>
<dbReference type="GO" id="GO:0007165">
    <property type="term" value="P:signal transduction"/>
    <property type="evidence" value="ECO:0007669"/>
    <property type="project" value="InterPro"/>
</dbReference>
<dbReference type="CDD" id="cd04138">
    <property type="entry name" value="H_N_K_Ras_like"/>
    <property type="match status" value="1"/>
</dbReference>
<dbReference type="FunFam" id="3.40.50.300:FF:000096">
    <property type="entry name" value="KRAS proto-oncogene, GTPase"/>
    <property type="match status" value="1"/>
</dbReference>
<dbReference type="Gene3D" id="3.40.50.300">
    <property type="entry name" value="P-loop containing nucleotide triphosphate hydrolases"/>
    <property type="match status" value="1"/>
</dbReference>
<dbReference type="InterPro" id="IPR027417">
    <property type="entry name" value="P-loop_NTPase"/>
</dbReference>
<dbReference type="InterPro" id="IPR005225">
    <property type="entry name" value="Small_GTP-bd"/>
</dbReference>
<dbReference type="InterPro" id="IPR001806">
    <property type="entry name" value="Small_GTPase"/>
</dbReference>
<dbReference type="InterPro" id="IPR020849">
    <property type="entry name" value="Small_GTPase_Ras-type"/>
</dbReference>
<dbReference type="NCBIfam" id="TIGR00231">
    <property type="entry name" value="small_GTP"/>
    <property type="match status" value="1"/>
</dbReference>
<dbReference type="PANTHER" id="PTHR24070">
    <property type="entry name" value="RAS, DI-RAS, AND RHEB FAMILY MEMBERS OF SMALL GTPASE SUPERFAMILY"/>
    <property type="match status" value="1"/>
</dbReference>
<dbReference type="Pfam" id="PF00071">
    <property type="entry name" value="Ras"/>
    <property type="match status" value="1"/>
</dbReference>
<dbReference type="PRINTS" id="PR00449">
    <property type="entry name" value="RASTRNSFRMNG"/>
</dbReference>
<dbReference type="SMART" id="SM00175">
    <property type="entry name" value="RAB"/>
    <property type="match status" value="1"/>
</dbReference>
<dbReference type="SMART" id="SM00173">
    <property type="entry name" value="RAS"/>
    <property type="match status" value="1"/>
</dbReference>
<dbReference type="SMART" id="SM00174">
    <property type="entry name" value="RHO"/>
    <property type="match status" value="1"/>
</dbReference>
<dbReference type="SUPFAM" id="SSF52540">
    <property type="entry name" value="P-loop containing nucleoside triphosphate hydrolases"/>
    <property type="match status" value="1"/>
</dbReference>
<dbReference type="PROSITE" id="PS51421">
    <property type="entry name" value="RAS"/>
    <property type="match status" value="1"/>
</dbReference>
<reference key="1">
    <citation type="journal article" date="1987" name="J. Virol.">
        <title>Biologic and molecular characterization of two newly isolated ras-containing murine leukemia viruses.</title>
        <authorList>
            <person name="Fredrickson T.N."/>
            <person name="O'Neill R.R."/>
            <person name="Rutledge R.A."/>
            <person name="Theodore T.S."/>
            <person name="Martin M.A."/>
            <person name="Ruscetti S.K."/>
            <person name="Austin J.B."/>
            <person name="Hartley J.W."/>
        </authorList>
    </citation>
    <scope>NUCLEOTIDE SEQUENCE [GENOMIC RNA]</scope>
</reference>
<accession>P23175</accession>
<evidence type="ECO:0000250" key="1">
    <source>
        <dbReference type="UniProtKB" id="P01112"/>
    </source>
</evidence>
<evidence type="ECO:0000255" key="2"/>
<evidence type="ECO:0000305" key="3"/>
<sequence length="189" mass="21397">MTEYKLVVVGARGVGKSALTIQLIQNHFVDEYDPTIEDSYRKQVVIDGETCLLDILDTAGQEEYSAMRDQYMRTGEGFLCVFAINNTKSFEDIHQYREQIKRVKDSDDVPMVLVGNKCDLAARTVESRQAQDLARSYGIPYIETSAKTRQGVEDAFYTLVREIRQHKLRKLNPPDESGPGCMSCKCVLS</sequence>
<gene>
    <name type="primary">H-RAS</name>
</gene>
<organism>
    <name type="scientific">Murine sarcoma virus NS.C58</name>
    <dbReference type="NCBI Taxonomy" id="11815"/>
    <lineage>
        <taxon>Viruses</taxon>
        <taxon>Riboviria</taxon>
        <taxon>Pararnavirae</taxon>
        <taxon>Artverviricota</taxon>
        <taxon>Revtraviricetes</taxon>
        <taxon>Ortervirales</taxon>
        <taxon>Retroviridae</taxon>
        <taxon>Orthoretrovirinae</taxon>
        <taxon>Gammaretrovirus</taxon>
        <taxon>Moloney murine sarcoma virus</taxon>
    </lineage>
</organism>